<comment type="function">
    <text evidence="1">Cell wall formation. Adds enolpyruvyl to UDP-N-acetylglucosamine.</text>
</comment>
<comment type="catalytic activity">
    <reaction evidence="1">
        <text>phosphoenolpyruvate + UDP-N-acetyl-alpha-D-glucosamine = UDP-N-acetyl-3-O-(1-carboxyvinyl)-alpha-D-glucosamine + phosphate</text>
        <dbReference type="Rhea" id="RHEA:18681"/>
        <dbReference type="ChEBI" id="CHEBI:43474"/>
        <dbReference type="ChEBI" id="CHEBI:57705"/>
        <dbReference type="ChEBI" id="CHEBI:58702"/>
        <dbReference type="ChEBI" id="CHEBI:68483"/>
        <dbReference type="EC" id="2.5.1.7"/>
    </reaction>
</comment>
<comment type="pathway">
    <text evidence="1">Cell wall biogenesis; peptidoglycan biosynthesis.</text>
</comment>
<comment type="subcellular location">
    <subcellularLocation>
        <location evidence="1">Cytoplasm</location>
    </subcellularLocation>
</comment>
<comment type="similarity">
    <text evidence="1">Belongs to the EPSP synthase family. MurA subfamily.</text>
</comment>
<organism>
    <name type="scientific">Desulfosudis oleivorans (strain DSM 6200 / JCM 39069 / Hxd3)</name>
    <name type="common">Desulfococcus oleovorans</name>
    <dbReference type="NCBI Taxonomy" id="96561"/>
    <lineage>
        <taxon>Bacteria</taxon>
        <taxon>Pseudomonadati</taxon>
        <taxon>Thermodesulfobacteriota</taxon>
        <taxon>Desulfobacteria</taxon>
        <taxon>Desulfobacterales</taxon>
        <taxon>Desulfosudaceae</taxon>
        <taxon>Desulfosudis</taxon>
    </lineage>
</organism>
<keyword id="KW-0131">Cell cycle</keyword>
<keyword id="KW-0132">Cell division</keyword>
<keyword id="KW-0133">Cell shape</keyword>
<keyword id="KW-0961">Cell wall biogenesis/degradation</keyword>
<keyword id="KW-0963">Cytoplasm</keyword>
<keyword id="KW-0573">Peptidoglycan synthesis</keyword>
<keyword id="KW-0670">Pyruvate</keyword>
<keyword id="KW-1185">Reference proteome</keyword>
<keyword id="KW-0808">Transferase</keyword>
<sequence>MDRIIVEGGRRLTGTVEISGAKNAALPILASSLLTNGTCTYTNVPDLRDIQSIKELLTHLGAKIECQGTTVQVDASGVNNHEAPYELVRKMRASILVLCPLVARLGRARVSLPGGCAIGERPIDFHLKGLEAMGADIALEHGYVNASAPKLTGGSIYFDVPSVTGTENLLMAAALADGTTRIGNAACEPEVTALVDVLNQMGANITGAGTPEITIQGVPSLNPVSVSIIPDRIETGTFMVAAALTKGDITITNAEPSHLKGQLDKLAQTGARIEVNGKVIRVVGGDTIKSVDVKTLPYPGFPTDMQAQFMVLMSVASGLSIITETIFENRFIHVSELKRMGADITISGNTAMVAGAPKLSGAPVMASDLRASASLVLAGLVADGTTEISRVYHLDRGYENLEEKFERLGASIRRVTP</sequence>
<reference key="1">
    <citation type="submission" date="2007-10" db="EMBL/GenBank/DDBJ databases">
        <title>Complete sequence of Desulfococcus oleovorans Hxd3.</title>
        <authorList>
            <consortium name="US DOE Joint Genome Institute"/>
            <person name="Copeland A."/>
            <person name="Lucas S."/>
            <person name="Lapidus A."/>
            <person name="Barry K."/>
            <person name="Glavina del Rio T."/>
            <person name="Dalin E."/>
            <person name="Tice H."/>
            <person name="Pitluck S."/>
            <person name="Kiss H."/>
            <person name="Brettin T."/>
            <person name="Bruce D."/>
            <person name="Detter J.C."/>
            <person name="Han C."/>
            <person name="Schmutz J."/>
            <person name="Larimer F."/>
            <person name="Land M."/>
            <person name="Hauser L."/>
            <person name="Kyrpides N."/>
            <person name="Kim E."/>
            <person name="Wawrik B."/>
            <person name="Richardson P."/>
        </authorList>
    </citation>
    <scope>NUCLEOTIDE SEQUENCE [LARGE SCALE GENOMIC DNA]</scope>
    <source>
        <strain>DSM 6200 / JCM 39069 / Hxd3</strain>
    </source>
</reference>
<evidence type="ECO:0000255" key="1">
    <source>
        <dbReference type="HAMAP-Rule" id="MF_00111"/>
    </source>
</evidence>
<feature type="chain" id="PRO_1000094687" description="UDP-N-acetylglucosamine 1-carboxyvinyltransferase">
    <location>
        <begin position="1"/>
        <end position="417"/>
    </location>
</feature>
<feature type="active site" description="Proton donor" evidence="1">
    <location>
        <position position="116"/>
    </location>
</feature>
<feature type="binding site" evidence="1">
    <location>
        <begin position="22"/>
        <end position="23"/>
    </location>
    <ligand>
        <name>phosphoenolpyruvate</name>
        <dbReference type="ChEBI" id="CHEBI:58702"/>
    </ligand>
</feature>
<feature type="binding site" evidence="1">
    <location>
        <position position="92"/>
    </location>
    <ligand>
        <name>UDP-N-acetyl-alpha-D-glucosamine</name>
        <dbReference type="ChEBI" id="CHEBI:57705"/>
    </ligand>
</feature>
<feature type="binding site" evidence="1">
    <location>
        <position position="304"/>
    </location>
    <ligand>
        <name>UDP-N-acetyl-alpha-D-glucosamine</name>
        <dbReference type="ChEBI" id="CHEBI:57705"/>
    </ligand>
</feature>
<feature type="binding site" evidence="1">
    <location>
        <position position="326"/>
    </location>
    <ligand>
        <name>UDP-N-acetyl-alpha-D-glucosamine</name>
        <dbReference type="ChEBI" id="CHEBI:57705"/>
    </ligand>
</feature>
<feature type="modified residue" description="2-(S-cysteinyl)pyruvic acid O-phosphothioketal" evidence="1">
    <location>
        <position position="116"/>
    </location>
</feature>
<proteinExistence type="inferred from homology"/>
<protein>
    <recommendedName>
        <fullName evidence="1">UDP-N-acetylglucosamine 1-carboxyvinyltransferase</fullName>
        <ecNumber evidence="1">2.5.1.7</ecNumber>
    </recommendedName>
    <alternativeName>
        <fullName evidence="1">Enoylpyruvate transferase</fullName>
    </alternativeName>
    <alternativeName>
        <fullName evidence="1">UDP-N-acetylglucosamine enolpyruvyl transferase</fullName>
        <shortName evidence="1">EPT</shortName>
    </alternativeName>
</protein>
<accession>A8ZWM4</accession>
<dbReference type="EC" id="2.5.1.7" evidence="1"/>
<dbReference type="EMBL" id="CP000859">
    <property type="protein sequence ID" value="ABW68355.1"/>
    <property type="molecule type" value="Genomic_DNA"/>
</dbReference>
<dbReference type="RefSeq" id="WP_012175967.1">
    <property type="nucleotide sequence ID" value="NC_009943.1"/>
</dbReference>
<dbReference type="SMR" id="A8ZWM4"/>
<dbReference type="STRING" id="96561.Dole_2551"/>
<dbReference type="KEGG" id="dol:Dole_2551"/>
<dbReference type="eggNOG" id="COG0766">
    <property type="taxonomic scope" value="Bacteria"/>
</dbReference>
<dbReference type="HOGENOM" id="CLU_027387_0_0_7"/>
<dbReference type="OrthoDB" id="9803760at2"/>
<dbReference type="UniPathway" id="UPA00219"/>
<dbReference type="Proteomes" id="UP000008561">
    <property type="component" value="Chromosome"/>
</dbReference>
<dbReference type="GO" id="GO:0005737">
    <property type="term" value="C:cytoplasm"/>
    <property type="evidence" value="ECO:0007669"/>
    <property type="project" value="UniProtKB-SubCell"/>
</dbReference>
<dbReference type="GO" id="GO:0008760">
    <property type="term" value="F:UDP-N-acetylglucosamine 1-carboxyvinyltransferase activity"/>
    <property type="evidence" value="ECO:0007669"/>
    <property type="project" value="UniProtKB-UniRule"/>
</dbReference>
<dbReference type="GO" id="GO:0051301">
    <property type="term" value="P:cell division"/>
    <property type="evidence" value="ECO:0007669"/>
    <property type="project" value="UniProtKB-KW"/>
</dbReference>
<dbReference type="GO" id="GO:0071555">
    <property type="term" value="P:cell wall organization"/>
    <property type="evidence" value="ECO:0007669"/>
    <property type="project" value="UniProtKB-KW"/>
</dbReference>
<dbReference type="GO" id="GO:0009252">
    <property type="term" value="P:peptidoglycan biosynthetic process"/>
    <property type="evidence" value="ECO:0007669"/>
    <property type="project" value="UniProtKB-UniRule"/>
</dbReference>
<dbReference type="GO" id="GO:0008360">
    <property type="term" value="P:regulation of cell shape"/>
    <property type="evidence" value="ECO:0007669"/>
    <property type="project" value="UniProtKB-KW"/>
</dbReference>
<dbReference type="GO" id="GO:0019277">
    <property type="term" value="P:UDP-N-acetylgalactosamine biosynthetic process"/>
    <property type="evidence" value="ECO:0007669"/>
    <property type="project" value="InterPro"/>
</dbReference>
<dbReference type="CDD" id="cd01555">
    <property type="entry name" value="UdpNAET"/>
    <property type="match status" value="1"/>
</dbReference>
<dbReference type="FunFam" id="3.65.10.10:FF:000001">
    <property type="entry name" value="UDP-N-acetylglucosamine 1-carboxyvinyltransferase"/>
    <property type="match status" value="1"/>
</dbReference>
<dbReference type="Gene3D" id="3.65.10.10">
    <property type="entry name" value="Enolpyruvate transferase domain"/>
    <property type="match status" value="2"/>
</dbReference>
<dbReference type="HAMAP" id="MF_00111">
    <property type="entry name" value="MurA"/>
    <property type="match status" value="1"/>
</dbReference>
<dbReference type="InterPro" id="IPR001986">
    <property type="entry name" value="Enolpyruvate_Tfrase_dom"/>
</dbReference>
<dbReference type="InterPro" id="IPR036968">
    <property type="entry name" value="Enolpyruvate_Tfrase_sf"/>
</dbReference>
<dbReference type="InterPro" id="IPR050068">
    <property type="entry name" value="MurA_subfamily"/>
</dbReference>
<dbReference type="InterPro" id="IPR013792">
    <property type="entry name" value="RNA3'P_cycl/enolpyr_Trfase_a/b"/>
</dbReference>
<dbReference type="InterPro" id="IPR005750">
    <property type="entry name" value="UDP_GlcNAc_COvinyl_MurA"/>
</dbReference>
<dbReference type="NCBIfam" id="TIGR01072">
    <property type="entry name" value="murA"/>
    <property type="match status" value="1"/>
</dbReference>
<dbReference type="NCBIfam" id="NF006873">
    <property type="entry name" value="PRK09369.1"/>
    <property type="match status" value="1"/>
</dbReference>
<dbReference type="PANTHER" id="PTHR43783">
    <property type="entry name" value="UDP-N-ACETYLGLUCOSAMINE 1-CARBOXYVINYLTRANSFERASE"/>
    <property type="match status" value="1"/>
</dbReference>
<dbReference type="PANTHER" id="PTHR43783:SF1">
    <property type="entry name" value="UDP-N-ACETYLGLUCOSAMINE 1-CARBOXYVINYLTRANSFERASE"/>
    <property type="match status" value="1"/>
</dbReference>
<dbReference type="Pfam" id="PF00275">
    <property type="entry name" value="EPSP_synthase"/>
    <property type="match status" value="1"/>
</dbReference>
<dbReference type="SUPFAM" id="SSF55205">
    <property type="entry name" value="EPT/RTPC-like"/>
    <property type="match status" value="1"/>
</dbReference>
<gene>
    <name evidence="1" type="primary">murA</name>
    <name type="ordered locus">Dole_2551</name>
</gene>
<name>MURA_DESOH</name>